<organism>
    <name type="scientific">Homo sapiens</name>
    <name type="common">Human</name>
    <dbReference type="NCBI Taxonomy" id="9606"/>
    <lineage>
        <taxon>Eukaryota</taxon>
        <taxon>Metazoa</taxon>
        <taxon>Chordata</taxon>
        <taxon>Craniata</taxon>
        <taxon>Vertebrata</taxon>
        <taxon>Euteleostomi</taxon>
        <taxon>Mammalia</taxon>
        <taxon>Eutheria</taxon>
        <taxon>Euarchontoglires</taxon>
        <taxon>Primates</taxon>
        <taxon>Haplorrhini</taxon>
        <taxon>Catarrhini</taxon>
        <taxon>Hominidae</taxon>
        <taxon>Homo</taxon>
    </lineage>
</organism>
<dbReference type="EMBL" id="AC007731">
    <property type="status" value="NOT_ANNOTATED_CDS"/>
    <property type="molecule type" value="Genomic_DNA"/>
</dbReference>
<dbReference type="GlyGen" id="A8MUU9">
    <property type="glycosylation" value="2 sites, 1 O-linked glycan (2 sites)"/>
</dbReference>
<dbReference type="iPTMnet" id="A8MUU9"/>
<dbReference type="PhosphoSitePlus" id="A8MUU9"/>
<dbReference type="BioMuta" id="-"/>
<dbReference type="jPOST" id="A8MUU9"/>
<dbReference type="MassIVE" id="A8MUU9"/>
<dbReference type="PeptideAtlas" id="A8MUU9"/>
<dbReference type="neXtProt" id="NX_A8MUU9"/>
<dbReference type="InParanoid" id="A8MUU9"/>
<dbReference type="PAN-GO" id="A8MUU9">
    <property type="GO annotations" value="0 GO annotations based on evolutionary models"/>
</dbReference>
<dbReference type="PhylomeDB" id="A8MUU9"/>
<dbReference type="Pharos" id="A8MUU9">
    <property type="development level" value="Tdark"/>
</dbReference>
<dbReference type="Proteomes" id="UP000005640">
    <property type="component" value="Unplaced"/>
</dbReference>
<dbReference type="RNAct" id="A8MUU9">
    <property type="molecule type" value="protein"/>
</dbReference>
<dbReference type="PANTHER" id="PTHR35683:SF7">
    <property type="entry name" value="APPLE DOMAIN-CONTAINING PROTEIN"/>
    <property type="match status" value="1"/>
</dbReference>
<dbReference type="PANTHER" id="PTHR35683">
    <property type="entry name" value="YALI0C04136P"/>
    <property type="match status" value="1"/>
</dbReference>
<evidence type="ECO:0000256" key="1">
    <source>
        <dbReference type="SAM" id="MobiDB-lite"/>
    </source>
</evidence>
<evidence type="ECO:0000305" key="2"/>
<reference key="1">
    <citation type="journal article" date="1999" name="Nature">
        <title>The DNA sequence of human chromosome 22.</title>
        <authorList>
            <person name="Dunham I."/>
            <person name="Hunt A.R."/>
            <person name="Collins J.E."/>
            <person name="Bruskiewich R."/>
            <person name="Beare D.M."/>
            <person name="Clamp M."/>
            <person name="Smink L.J."/>
            <person name="Ainscough R."/>
            <person name="Almeida J.P."/>
            <person name="Babbage A.K."/>
            <person name="Bagguley C."/>
            <person name="Bailey J."/>
            <person name="Barlow K.F."/>
            <person name="Bates K.N."/>
            <person name="Beasley O.P."/>
            <person name="Bird C.P."/>
            <person name="Blakey S.E."/>
            <person name="Bridgeman A.M."/>
            <person name="Buck D."/>
            <person name="Burgess J."/>
            <person name="Burrill W.D."/>
            <person name="Burton J."/>
            <person name="Carder C."/>
            <person name="Carter N.P."/>
            <person name="Chen Y."/>
            <person name="Clark G."/>
            <person name="Clegg S.M."/>
            <person name="Cobley V.E."/>
            <person name="Cole C.G."/>
            <person name="Collier R.E."/>
            <person name="Connor R."/>
            <person name="Conroy D."/>
            <person name="Corby N.R."/>
            <person name="Coville G.J."/>
            <person name="Cox A.V."/>
            <person name="Davis J."/>
            <person name="Dawson E."/>
            <person name="Dhami P.D."/>
            <person name="Dockree C."/>
            <person name="Dodsworth S.J."/>
            <person name="Durbin R.M."/>
            <person name="Ellington A.G."/>
            <person name="Evans K.L."/>
            <person name="Fey J.M."/>
            <person name="Fleming K."/>
            <person name="French L."/>
            <person name="Garner A.A."/>
            <person name="Gilbert J.G.R."/>
            <person name="Goward M.E."/>
            <person name="Grafham D.V."/>
            <person name="Griffiths M.N.D."/>
            <person name="Hall C."/>
            <person name="Hall R.E."/>
            <person name="Hall-Tamlyn G."/>
            <person name="Heathcott R.W."/>
            <person name="Ho S."/>
            <person name="Holmes S."/>
            <person name="Hunt S.E."/>
            <person name="Jones M.C."/>
            <person name="Kershaw J."/>
            <person name="Kimberley A.M."/>
            <person name="King A."/>
            <person name="Laird G.K."/>
            <person name="Langford C.F."/>
            <person name="Leversha M.A."/>
            <person name="Lloyd C."/>
            <person name="Lloyd D.M."/>
            <person name="Martyn I.D."/>
            <person name="Mashreghi-Mohammadi M."/>
            <person name="Matthews L.H."/>
            <person name="Mccann O.T."/>
            <person name="Mcclay J."/>
            <person name="Mclaren S."/>
            <person name="McMurray A.A."/>
            <person name="Milne S.A."/>
            <person name="Mortimore B.J."/>
            <person name="Odell C.N."/>
            <person name="Pavitt R."/>
            <person name="Pearce A.V."/>
            <person name="Pearson D."/>
            <person name="Phillimore B.J.C.T."/>
            <person name="Phillips S.H."/>
            <person name="Plumb R.W."/>
            <person name="Ramsay H."/>
            <person name="Ramsey Y."/>
            <person name="Rogers L."/>
            <person name="Ross M.T."/>
            <person name="Scott C.E."/>
            <person name="Sehra H.K."/>
            <person name="Skuce C.D."/>
            <person name="Smalley S."/>
            <person name="Smith M.L."/>
            <person name="Soderlund C."/>
            <person name="Spragon L."/>
            <person name="Steward C.A."/>
            <person name="Sulston J.E."/>
            <person name="Swann R.M."/>
            <person name="Vaudin M."/>
            <person name="Wall M."/>
            <person name="Wallis J.M."/>
            <person name="Whiteley M.N."/>
            <person name="Willey D.L."/>
            <person name="Williams L."/>
            <person name="Williams S.A."/>
            <person name="Williamson H."/>
            <person name="Wilmer T.E."/>
            <person name="Wilming L."/>
            <person name="Wright C.L."/>
            <person name="Hubbard T."/>
            <person name="Bentley D.R."/>
            <person name="Beck S."/>
            <person name="Rogers J."/>
            <person name="Shimizu N."/>
            <person name="Minoshima S."/>
            <person name="Kawasaki K."/>
            <person name="Sasaki T."/>
            <person name="Asakawa S."/>
            <person name="Kudoh J."/>
            <person name="Shintani A."/>
            <person name="Shibuya K."/>
            <person name="Yoshizaki Y."/>
            <person name="Aoki N."/>
            <person name="Mitsuyama S."/>
            <person name="Roe B.A."/>
            <person name="Chen F."/>
            <person name="Chu L."/>
            <person name="Crabtree J."/>
            <person name="Deschamps S."/>
            <person name="Do A."/>
            <person name="Do T."/>
            <person name="Dorman A."/>
            <person name="Fang F."/>
            <person name="Fu Y."/>
            <person name="Hu P."/>
            <person name="Hua A."/>
            <person name="Kenton S."/>
            <person name="Lai H."/>
            <person name="Lao H.I."/>
            <person name="Lewis J."/>
            <person name="Lewis S."/>
            <person name="Lin S.-P."/>
            <person name="Loh P."/>
            <person name="Malaj E."/>
            <person name="Nguyen T."/>
            <person name="Pan H."/>
            <person name="Phan S."/>
            <person name="Qi S."/>
            <person name="Qian Y."/>
            <person name="Ray L."/>
            <person name="Ren Q."/>
            <person name="Shaull S."/>
            <person name="Sloan D."/>
            <person name="Song L."/>
            <person name="Wang Q."/>
            <person name="Wang Y."/>
            <person name="Wang Z."/>
            <person name="White J."/>
            <person name="Willingham D."/>
            <person name="Wu H."/>
            <person name="Yao Z."/>
            <person name="Zhan M."/>
            <person name="Zhang G."/>
            <person name="Chissoe S."/>
            <person name="Murray J."/>
            <person name="Miller N."/>
            <person name="Minx P."/>
            <person name="Fulton R."/>
            <person name="Johnson D."/>
            <person name="Bemis G."/>
            <person name="Bentley D."/>
            <person name="Bradshaw H."/>
            <person name="Bourne S."/>
            <person name="Cordes M."/>
            <person name="Du Z."/>
            <person name="Fulton L."/>
            <person name="Goela D."/>
            <person name="Graves T."/>
            <person name="Hawkins J."/>
            <person name="Hinds K."/>
            <person name="Kemp K."/>
            <person name="Latreille P."/>
            <person name="Layman D."/>
            <person name="Ozersky P."/>
            <person name="Rohlfing T."/>
            <person name="Scheet P."/>
            <person name="Walker C."/>
            <person name="Wamsley A."/>
            <person name="Wohldmann P."/>
            <person name="Pepin K."/>
            <person name="Nelson J."/>
            <person name="Korf I."/>
            <person name="Bedell J.A."/>
            <person name="Hillier L.W."/>
            <person name="Mardis E."/>
            <person name="Waterston R."/>
            <person name="Wilson R."/>
            <person name="Emanuel B.S."/>
            <person name="Shaikh T."/>
            <person name="Kurahashi H."/>
            <person name="Saitta S."/>
            <person name="Budarf M.L."/>
            <person name="McDermid H.E."/>
            <person name="Johnson A."/>
            <person name="Wong A.C.C."/>
            <person name="Morrow B.E."/>
            <person name="Edelmann L."/>
            <person name="Kim U.J."/>
            <person name="Shizuya H."/>
            <person name="Simon M.I."/>
            <person name="Dumanski J.P."/>
            <person name="Peyrard M."/>
            <person name="Kedra D."/>
            <person name="Seroussi E."/>
            <person name="Fransson I."/>
            <person name="Tapia I."/>
            <person name="Bruder C.E."/>
            <person name="O'Brien K.P."/>
            <person name="Wilkinson P."/>
            <person name="Bodenteich A."/>
            <person name="Hartman K."/>
            <person name="Hu X."/>
            <person name="Khan A.S."/>
            <person name="Lane L."/>
            <person name="Tilahun Y."/>
            <person name="Wright H."/>
        </authorList>
    </citation>
    <scope>NUCLEOTIDE SEQUENCE [LARGE SCALE GENOMIC DNA]</scope>
</reference>
<sequence length="505" mass="55306">MPPTASLTRSPPTASQTRTLPRASRTRTPPRASLTRSPPTASLRRTPSRASRTRTPPRASLKRTPSRASLTRTLSRASLTRLKSRASHTRTPSRASLTRTPPTASRTRSLPRASRTRTPPRTSQRRMPPRTSQTRTPPRASLRRTPSRASRTRTPPRASLRRTPSRASLTRTPSRASLTRLKSRASHTRTPSRASLTRTPPTASLTRASRTRTPPRTSQTRTPPRASLRRTPSRASLTRTPSRASLTRTPSRASLTRLKSRASHTRTPSRASLTRTPPTASLTRTPPTASLTRTPPRASLTRSPPRASLTRTPPTASLTRSPPTASLTRTPPRASLTRSPPRASLTRTPSTASLTRTPSRASLTRSKSRASHTRTPSRASLTRTPPRASLTRTPPRASLTRSPPTASLTRMPPTASLTRSPPRASLTRTPPRASLTRSPSTASLTRTPPGTWLRRTPPRTSLTRTPPTASLTRTPYTASLTRTPYTASLMRMPYMTSLMTPYKAR</sequence>
<name>YV023_HUMAN</name>
<accession>A8MUU9</accession>
<keyword id="KW-1185">Reference proteome</keyword>
<protein>
    <recommendedName>
        <fullName>Putative uncharacterized protein ENSP00000383309</fullName>
    </recommendedName>
</protein>
<comment type="caution">
    <text evidence="2">Product of a dubious gene prediction. Except for the proteomic data there is no mRNA or EST supporting this predicted gene.</text>
</comment>
<proteinExistence type="uncertain"/>
<feature type="chain" id="PRO_0000332256" description="Putative uncharacterized protein ENSP00000383309">
    <location>
        <begin position="1"/>
        <end position="505"/>
    </location>
</feature>
<feature type="region of interest" description="Disordered" evidence="1">
    <location>
        <begin position="1"/>
        <end position="474"/>
    </location>
</feature>
<feature type="compositionally biased region" description="Polar residues" evidence="1">
    <location>
        <begin position="1"/>
        <end position="16"/>
    </location>
</feature>
<feature type="compositionally biased region" description="Low complexity" evidence="1">
    <location>
        <begin position="17"/>
        <end position="33"/>
    </location>
</feature>
<feature type="compositionally biased region" description="Low complexity" evidence="1">
    <location>
        <begin position="40"/>
        <end position="59"/>
    </location>
</feature>
<feature type="compositionally biased region" description="Polar residues" evidence="1">
    <location>
        <begin position="66"/>
        <end position="78"/>
    </location>
</feature>
<feature type="compositionally biased region" description="Low complexity" evidence="1">
    <location>
        <begin position="96"/>
        <end position="122"/>
    </location>
</feature>
<feature type="compositionally biased region" description="Low complexity" evidence="1">
    <location>
        <begin position="129"/>
        <end position="140"/>
    </location>
</feature>
<feature type="compositionally biased region" description="Low complexity" evidence="1">
    <location>
        <begin position="147"/>
        <end position="158"/>
    </location>
</feature>
<feature type="compositionally biased region" description="Polar residues" evidence="1">
    <location>
        <begin position="165"/>
        <end position="177"/>
    </location>
</feature>
<feature type="compositionally biased region" description="Polar residues" evidence="1">
    <location>
        <begin position="188"/>
        <end position="200"/>
    </location>
</feature>
<feature type="compositionally biased region" description="Low complexity" evidence="1">
    <location>
        <begin position="201"/>
        <end position="226"/>
    </location>
</feature>
<feature type="compositionally biased region" description="Polar residues" evidence="1">
    <location>
        <begin position="233"/>
        <end position="254"/>
    </location>
</feature>
<feature type="compositionally biased region" description="Polar residues" evidence="1">
    <location>
        <begin position="265"/>
        <end position="293"/>
    </location>
</feature>
<feature type="compositionally biased region" description="Polar residues" evidence="1">
    <location>
        <begin position="309"/>
        <end position="329"/>
    </location>
</feature>
<feature type="compositionally biased region" description="Polar residues" evidence="1">
    <location>
        <begin position="345"/>
        <end position="365"/>
    </location>
</feature>
<feature type="compositionally biased region" description="Polar residues" evidence="1">
    <location>
        <begin position="373"/>
        <end position="383"/>
    </location>
</feature>
<feature type="compositionally biased region" description="Polar residues" evidence="1">
    <location>
        <begin position="399"/>
        <end position="408"/>
    </location>
</feature>
<feature type="compositionally biased region" description="Polar residues" evidence="1">
    <location>
        <begin position="435"/>
        <end position="448"/>
    </location>
</feature>
<feature type="compositionally biased region" description="Low complexity" evidence="1">
    <location>
        <begin position="453"/>
        <end position="474"/>
    </location>
</feature>